<protein>
    <recommendedName>
        <fullName evidence="1">Glycerol kinase</fullName>
        <ecNumber evidence="1">2.7.1.30</ecNumber>
    </recommendedName>
    <alternativeName>
        <fullName evidence="1">ATP:glycerol 3-phosphotransferase</fullName>
    </alternativeName>
    <alternativeName>
        <fullName evidence="1">Glycerokinase</fullName>
        <shortName evidence="1">GK</shortName>
    </alternativeName>
</protein>
<keyword id="KW-0021">Allosteric enzyme</keyword>
<keyword id="KW-0067">ATP-binding</keyword>
<keyword id="KW-0319">Glycerol metabolism</keyword>
<keyword id="KW-0418">Kinase</keyword>
<keyword id="KW-0479">Metal-binding</keyword>
<keyword id="KW-0547">Nucleotide-binding</keyword>
<keyword id="KW-0808">Transferase</keyword>
<keyword id="KW-0862">Zinc</keyword>
<accession>B7NU81</accession>
<feature type="chain" id="PRO_1000118550" description="Glycerol kinase">
    <location>
        <begin position="1"/>
        <end position="502"/>
    </location>
</feature>
<feature type="binding site" evidence="1">
    <location>
        <position position="14"/>
    </location>
    <ligand>
        <name>ADP</name>
        <dbReference type="ChEBI" id="CHEBI:456216"/>
    </ligand>
</feature>
<feature type="binding site" evidence="1">
    <location>
        <position position="14"/>
    </location>
    <ligand>
        <name>ATP</name>
        <dbReference type="ChEBI" id="CHEBI:30616"/>
    </ligand>
</feature>
<feature type="binding site" evidence="1">
    <location>
        <position position="14"/>
    </location>
    <ligand>
        <name>sn-glycerol 3-phosphate</name>
        <dbReference type="ChEBI" id="CHEBI:57597"/>
    </ligand>
</feature>
<feature type="binding site" evidence="1">
    <location>
        <position position="15"/>
    </location>
    <ligand>
        <name>ATP</name>
        <dbReference type="ChEBI" id="CHEBI:30616"/>
    </ligand>
</feature>
<feature type="binding site" evidence="1">
    <location>
        <position position="16"/>
    </location>
    <ligand>
        <name>ATP</name>
        <dbReference type="ChEBI" id="CHEBI:30616"/>
    </ligand>
</feature>
<feature type="binding site" evidence="1">
    <location>
        <position position="18"/>
    </location>
    <ligand>
        <name>ADP</name>
        <dbReference type="ChEBI" id="CHEBI:456216"/>
    </ligand>
</feature>
<feature type="binding site" evidence="1">
    <location>
        <position position="84"/>
    </location>
    <ligand>
        <name>glycerol</name>
        <dbReference type="ChEBI" id="CHEBI:17754"/>
    </ligand>
</feature>
<feature type="binding site" evidence="1">
    <location>
        <position position="84"/>
    </location>
    <ligand>
        <name>sn-glycerol 3-phosphate</name>
        <dbReference type="ChEBI" id="CHEBI:57597"/>
    </ligand>
</feature>
<feature type="binding site" evidence="1">
    <location>
        <position position="85"/>
    </location>
    <ligand>
        <name>glycerol</name>
        <dbReference type="ChEBI" id="CHEBI:17754"/>
    </ligand>
</feature>
<feature type="binding site" evidence="1">
    <location>
        <position position="85"/>
    </location>
    <ligand>
        <name>sn-glycerol 3-phosphate</name>
        <dbReference type="ChEBI" id="CHEBI:57597"/>
    </ligand>
</feature>
<feature type="binding site" evidence="1">
    <location>
        <position position="136"/>
    </location>
    <ligand>
        <name>glycerol</name>
        <dbReference type="ChEBI" id="CHEBI:17754"/>
    </ligand>
</feature>
<feature type="binding site" evidence="1">
    <location>
        <position position="136"/>
    </location>
    <ligand>
        <name>sn-glycerol 3-phosphate</name>
        <dbReference type="ChEBI" id="CHEBI:57597"/>
    </ligand>
</feature>
<feature type="binding site" evidence="1">
    <location>
        <position position="246"/>
    </location>
    <ligand>
        <name>glycerol</name>
        <dbReference type="ChEBI" id="CHEBI:17754"/>
    </ligand>
</feature>
<feature type="binding site" evidence="1">
    <location>
        <position position="246"/>
    </location>
    <ligand>
        <name>sn-glycerol 3-phosphate</name>
        <dbReference type="ChEBI" id="CHEBI:57597"/>
    </ligand>
</feature>
<feature type="binding site" evidence="1">
    <location>
        <position position="247"/>
    </location>
    <ligand>
        <name>glycerol</name>
        <dbReference type="ChEBI" id="CHEBI:17754"/>
    </ligand>
</feature>
<feature type="binding site" evidence="1">
    <location>
        <position position="268"/>
    </location>
    <ligand>
        <name>ADP</name>
        <dbReference type="ChEBI" id="CHEBI:456216"/>
    </ligand>
</feature>
<feature type="binding site" evidence="1">
    <location>
        <position position="268"/>
    </location>
    <ligand>
        <name>ATP</name>
        <dbReference type="ChEBI" id="CHEBI:30616"/>
    </ligand>
</feature>
<feature type="binding site" evidence="1">
    <location>
        <position position="311"/>
    </location>
    <ligand>
        <name>ADP</name>
        <dbReference type="ChEBI" id="CHEBI:456216"/>
    </ligand>
</feature>
<feature type="binding site" evidence="1">
    <location>
        <position position="311"/>
    </location>
    <ligand>
        <name>ATP</name>
        <dbReference type="ChEBI" id="CHEBI:30616"/>
    </ligand>
</feature>
<feature type="binding site" evidence="1">
    <location>
        <position position="315"/>
    </location>
    <ligand>
        <name>ATP</name>
        <dbReference type="ChEBI" id="CHEBI:30616"/>
    </ligand>
</feature>
<feature type="binding site" evidence="1">
    <location>
        <position position="412"/>
    </location>
    <ligand>
        <name>ADP</name>
        <dbReference type="ChEBI" id="CHEBI:456216"/>
    </ligand>
</feature>
<feature type="binding site" evidence="1">
    <location>
        <position position="412"/>
    </location>
    <ligand>
        <name>ATP</name>
        <dbReference type="ChEBI" id="CHEBI:30616"/>
    </ligand>
</feature>
<feature type="binding site" evidence="1">
    <location>
        <position position="416"/>
    </location>
    <ligand>
        <name>ADP</name>
        <dbReference type="ChEBI" id="CHEBI:456216"/>
    </ligand>
</feature>
<name>GLPK_ECO7I</name>
<evidence type="ECO:0000255" key="1">
    <source>
        <dbReference type="HAMAP-Rule" id="MF_00186"/>
    </source>
</evidence>
<comment type="function">
    <text evidence="1">Key enzyme in the regulation of glycerol uptake and metabolism. Catalyzes the phosphorylation of glycerol to yield sn-glycerol 3-phosphate.</text>
</comment>
<comment type="catalytic activity">
    <reaction evidence="1">
        <text>glycerol + ATP = sn-glycerol 3-phosphate + ADP + H(+)</text>
        <dbReference type="Rhea" id="RHEA:21644"/>
        <dbReference type="ChEBI" id="CHEBI:15378"/>
        <dbReference type="ChEBI" id="CHEBI:17754"/>
        <dbReference type="ChEBI" id="CHEBI:30616"/>
        <dbReference type="ChEBI" id="CHEBI:57597"/>
        <dbReference type="ChEBI" id="CHEBI:456216"/>
        <dbReference type="EC" id="2.7.1.30"/>
    </reaction>
</comment>
<comment type="activity regulation">
    <text evidence="1">Activity of this regulatory enzyme is affected by several metabolites. Allosterically and non-competitively inhibited by fructose 1,6-bisphosphate (FBP) and unphosphorylated phosphocarrier protein EIIA-Glc (III-Glc), an integral component of the bacterial phosphotransferase (PTS) system.</text>
</comment>
<comment type="pathway">
    <text evidence="1">Polyol metabolism; glycerol degradation via glycerol kinase pathway; sn-glycerol 3-phosphate from glycerol: step 1/1.</text>
</comment>
<comment type="subunit">
    <text evidence="1">Homotetramer and homodimer (in equilibrium). Heterodimer with EIIA-Glc. Binds 1 zinc ion per glycerol kinase EIIA-Glc dimer. The zinc ion is important for dimerization.</text>
</comment>
<comment type="similarity">
    <text evidence="1">Belongs to the FGGY kinase family.</text>
</comment>
<organism>
    <name type="scientific">Escherichia coli O7:K1 (strain IAI39 / ExPEC)</name>
    <dbReference type="NCBI Taxonomy" id="585057"/>
    <lineage>
        <taxon>Bacteria</taxon>
        <taxon>Pseudomonadati</taxon>
        <taxon>Pseudomonadota</taxon>
        <taxon>Gammaproteobacteria</taxon>
        <taxon>Enterobacterales</taxon>
        <taxon>Enterobacteriaceae</taxon>
        <taxon>Escherichia</taxon>
    </lineage>
</organism>
<dbReference type="EC" id="2.7.1.30" evidence="1"/>
<dbReference type="EMBL" id="CU928164">
    <property type="protein sequence ID" value="CAR19189.1"/>
    <property type="molecule type" value="Genomic_DNA"/>
</dbReference>
<dbReference type="RefSeq" id="WP_000136777.1">
    <property type="nucleotide sequence ID" value="NC_011750.1"/>
</dbReference>
<dbReference type="RefSeq" id="YP_002409000.1">
    <property type="nucleotide sequence ID" value="NC_011750.1"/>
</dbReference>
<dbReference type="SMR" id="B7NU81"/>
<dbReference type="STRING" id="585057.ECIAI39_3070"/>
<dbReference type="KEGG" id="ect:ECIAI39_3070"/>
<dbReference type="PATRIC" id="fig|585057.6.peg.3182"/>
<dbReference type="HOGENOM" id="CLU_009281_2_3_6"/>
<dbReference type="UniPathway" id="UPA00618">
    <property type="reaction ID" value="UER00672"/>
</dbReference>
<dbReference type="Proteomes" id="UP000000749">
    <property type="component" value="Chromosome"/>
</dbReference>
<dbReference type="GO" id="GO:0005829">
    <property type="term" value="C:cytosol"/>
    <property type="evidence" value="ECO:0007669"/>
    <property type="project" value="TreeGrafter"/>
</dbReference>
<dbReference type="GO" id="GO:0005524">
    <property type="term" value="F:ATP binding"/>
    <property type="evidence" value="ECO:0007669"/>
    <property type="project" value="UniProtKB-UniRule"/>
</dbReference>
<dbReference type="GO" id="GO:0004370">
    <property type="term" value="F:glycerol kinase activity"/>
    <property type="evidence" value="ECO:0000250"/>
    <property type="project" value="UniProtKB"/>
</dbReference>
<dbReference type="GO" id="GO:0046872">
    <property type="term" value="F:metal ion binding"/>
    <property type="evidence" value="ECO:0007669"/>
    <property type="project" value="UniProtKB-KW"/>
</dbReference>
<dbReference type="GO" id="GO:0019563">
    <property type="term" value="P:glycerol catabolic process"/>
    <property type="evidence" value="ECO:0007669"/>
    <property type="project" value="UniProtKB-UniRule"/>
</dbReference>
<dbReference type="GO" id="GO:0006071">
    <property type="term" value="P:glycerol metabolic process"/>
    <property type="evidence" value="ECO:0000250"/>
    <property type="project" value="UniProtKB"/>
</dbReference>
<dbReference type="GO" id="GO:0006072">
    <property type="term" value="P:glycerol-3-phosphate metabolic process"/>
    <property type="evidence" value="ECO:0007669"/>
    <property type="project" value="InterPro"/>
</dbReference>
<dbReference type="CDD" id="cd07786">
    <property type="entry name" value="FGGY_EcGK_like"/>
    <property type="match status" value="1"/>
</dbReference>
<dbReference type="FunFam" id="3.30.420.40:FF:000007">
    <property type="entry name" value="Glycerol kinase"/>
    <property type="match status" value="1"/>
</dbReference>
<dbReference type="FunFam" id="3.30.420.40:FF:000008">
    <property type="entry name" value="Glycerol kinase"/>
    <property type="match status" value="1"/>
</dbReference>
<dbReference type="Gene3D" id="3.30.420.40">
    <property type="match status" value="2"/>
</dbReference>
<dbReference type="HAMAP" id="MF_00186">
    <property type="entry name" value="Glycerol_kin"/>
    <property type="match status" value="1"/>
</dbReference>
<dbReference type="InterPro" id="IPR043129">
    <property type="entry name" value="ATPase_NBD"/>
</dbReference>
<dbReference type="InterPro" id="IPR000577">
    <property type="entry name" value="Carb_kinase_FGGY"/>
</dbReference>
<dbReference type="InterPro" id="IPR018483">
    <property type="entry name" value="Carb_kinase_FGGY_CS"/>
</dbReference>
<dbReference type="InterPro" id="IPR018485">
    <property type="entry name" value="FGGY_C"/>
</dbReference>
<dbReference type="InterPro" id="IPR018484">
    <property type="entry name" value="FGGY_N"/>
</dbReference>
<dbReference type="InterPro" id="IPR005999">
    <property type="entry name" value="Glycerol_kin"/>
</dbReference>
<dbReference type="NCBIfam" id="TIGR01311">
    <property type="entry name" value="glycerol_kin"/>
    <property type="match status" value="1"/>
</dbReference>
<dbReference type="NCBIfam" id="NF000756">
    <property type="entry name" value="PRK00047.1"/>
    <property type="match status" value="1"/>
</dbReference>
<dbReference type="PANTHER" id="PTHR10196:SF69">
    <property type="entry name" value="GLYCEROL KINASE"/>
    <property type="match status" value="1"/>
</dbReference>
<dbReference type="PANTHER" id="PTHR10196">
    <property type="entry name" value="SUGAR KINASE"/>
    <property type="match status" value="1"/>
</dbReference>
<dbReference type="Pfam" id="PF02782">
    <property type="entry name" value="FGGY_C"/>
    <property type="match status" value="1"/>
</dbReference>
<dbReference type="Pfam" id="PF00370">
    <property type="entry name" value="FGGY_N"/>
    <property type="match status" value="1"/>
</dbReference>
<dbReference type="PIRSF" id="PIRSF000538">
    <property type="entry name" value="GlpK"/>
    <property type="match status" value="1"/>
</dbReference>
<dbReference type="SUPFAM" id="SSF53067">
    <property type="entry name" value="Actin-like ATPase domain"/>
    <property type="match status" value="2"/>
</dbReference>
<dbReference type="PROSITE" id="PS00933">
    <property type="entry name" value="FGGY_KINASES_1"/>
    <property type="match status" value="1"/>
</dbReference>
<dbReference type="PROSITE" id="PS00445">
    <property type="entry name" value="FGGY_KINASES_2"/>
    <property type="match status" value="1"/>
</dbReference>
<reference key="1">
    <citation type="journal article" date="2009" name="PLoS Genet.">
        <title>Organised genome dynamics in the Escherichia coli species results in highly diverse adaptive paths.</title>
        <authorList>
            <person name="Touchon M."/>
            <person name="Hoede C."/>
            <person name="Tenaillon O."/>
            <person name="Barbe V."/>
            <person name="Baeriswyl S."/>
            <person name="Bidet P."/>
            <person name="Bingen E."/>
            <person name="Bonacorsi S."/>
            <person name="Bouchier C."/>
            <person name="Bouvet O."/>
            <person name="Calteau A."/>
            <person name="Chiapello H."/>
            <person name="Clermont O."/>
            <person name="Cruveiller S."/>
            <person name="Danchin A."/>
            <person name="Diard M."/>
            <person name="Dossat C."/>
            <person name="Karoui M.E."/>
            <person name="Frapy E."/>
            <person name="Garry L."/>
            <person name="Ghigo J.M."/>
            <person name="Gilles A.M."/>
            <person name="Johnson J."/>
            <person name="Le Bouguenec C."/>
            <person name="Lescat M."/>
            <person name="Mangenot S."/>
            <person name="Martinez-Jehanne V."/>
            <person name="Matic I."/>
            <person name="Nassif X."/>
            <person name="Oztas S."/>
            <person name="Petit M.A."/>
            <person name="Pichon C."/>
            <person name="Rouy Z."/>
            <person name="Ruf C.S."/>
            <person name="Schneider D."/>
            <person name="Tourret J."/>
            <person name="Vacherie B."/>
            <person name="Vallenet D."/>
            <person name="Medigue C."/>
            <person name="Rocha E.P.C."/>
            <person name="Denamur E."/>
        </authorList>
    </citation>
    <scope>NUCLEOTIDE SEQUENCE [LARGE SCALE GENOMIC DNA]</scope>
    <source>
        <strain>IAI39 / ExPEC</strain>
    </source>
</reference>
<sequence length="502" mass="56215">MTEKKYIVALDQGTTSSRAVVMDHDANIISVSQREFEQIYPKPGWVEHDPMEIWATQSSTLVEVLAKADISADQIAAIGITNQRETTIVWEKETGKPIYNAIVWQCRRTAEICEHLKRDGLEDYIRSNTGLVIDPYFSGTKVKWILDHVEGSRERARRGELLFGTVDTWLIWKMTQGRVHVTDYTNASRTMLFNIHTLDWDDKMLEVLDIPREMLPEVRRSSEVYGQTNIGGKGGTRIPISGIAGDQQAALFGQLCVKEGMAKNTYGTGCFMLMNTGEKAVKSENGLLTTIACGPTGEVNYALEGAVFMAGASIQWLRDEMKLINDAYDSEYFATKVQNTNGVYVVPAFTGLGAPYWDPYARGAIFGLTRGVNANHIIRATLESIAYQTRDVLEAMQADSGIRLHALRVDGGAVANNFLMQFQSDILGTRVERPEVREVTALGAAYLAGLAVGFWQNLDELQEKAVIEREFRPGIETTERNYRYAGWKKAVKRAMAWEEHDE</sequence>
<gene>
    <name evidence="1" type="primary">glpK</name>
    <name type="ordered locus">ECIAI39_3070</name>
</gene>
<proteinExistence type="inferred from homology"/>